<organism>
    <name type="scientific">Wigglesworthia glossinidia brevipalpis</name>
    <dbReference type="NCBI Taxonomy" id="36870"/>
    <lineage>
        <taxon>Bacteria</taxon>
        <taxon>Pseudomonadati</taxon>
        <taxon>Pseudomonadota</taxon>
        <taxon>Gammaproteobacteria</taxon>
        <taxon>Enterobacterales</taxon>
        <taxon>Erwiniaceae</taxon>
        <taxon>Wigglesworthia</taxon>
    </lineage>
</organism>
<accession>Q8D339</accession>
<evidence type="ECO:0000255" key="1">
    <source>
        <dbReference type="HAMAP-Rule" id="MF_01165"/>
    </source>
</evidence>
<gene>
    <name evidence="1" type="primary">arnT</name>
    <name type="ordered locus">WIGBR1620</name>
</gene>
<sequence>MDCISTKNNKINKIKFSITIIAFILLYYLIPLNYRDLWQPDETRYAEISREMLQNKNWSIPYLLDIRYFEKPIFGYWINSISQFFFGHNNFSVRFGSFLFTLFSANLIYLFSKKIWKNKILSLNSVIIFLSILLVYIIGTYSVLDSIISFWINLSMISFWLASTSKVKKYKIKNYIILGISIGIGFITKGFISLLIPFISIFIWLFLTKININKTIIHCFFSLLISILIIFPWIYKISYLEKDFIRYFIFIEHIQRFIGENAQHKSPFWYYFPIFIIGCLPWSGFLFSTLNLAWNTRKNKKIEFYLLLWIIVQFCFFSISKGKLPTYILPCFFPLSILIAKNIEKCNLKNKKKLLKINSIINTIVGSTLLIFIILHEKYKFFGCSLYNKNEYYKLILCIFSIFVWIFLNLCIIFNDFKFWRITSLSIIGIAFLFGLYVPEKIIYAKQPQLFIKEVFDDLESSDFIFSNNIGLSTAISWEIKKNNIFIFENKGELEYGLSYLDSKHRFIKKEDFKNWLSKNKEKKISLVMLLPDKHYNWKKFNVPETKKFFQHERLILLKYNF</sequence>
<reference key="1">
    <citation type="journal article" date="2002" name="Nat. Genet.">
        <title>Genome sequence of the endocellular obligate symbiont of tsetse flies, Wigglesworthia glossinidia.</title>
        <authorList>
            <person name="Akman L."/>
            <person name="Yamashita A."/>
            <person name="Watanabe H."/>
            <person name="Oshima K."/>
            <person name="Shiba T."/>
            <person name="Hattori M."/>
            <person name="Aksoy S."/>
        </authorList>
    </citation>
    <scope>NUCLEOTIDE SEQUENCE [LARGE SCALE GENOMIC DNA]</scope>
</reference>
<protein>
    <recommendedName>
        <fullName evidence="1">Undecaprenyl phosphate-alpha-4-amino-4-deoxy-L-arabinose arabinosyl transferase</fullName>
        <ecNumber evidence="1">2.4.2.43</ecNumber>
    </recommendedName>
    <alternativeName>
        <fullName evidence="1">4-amino-4-deoxy-L-arabinose lipid A transferase</fullName>
    </alternativeName>
    <alternativeName>
        <fullName evidence="1">Lipid IV(A) 4-amino-4-deoxy-L-arabinosyltransferase</fullName>
    </alternativeName>
    <alternativeName>
        <fullName evidence="1">Undecaprenyl phosphate-alpha-L-Ara4N transferase</fullName>
    </alternativeName>
</protein>
<comment type="function">
    <text evidence="1">Catalyzes the transfer of the L-Ara4N moiety of the glycolipid undecaprenyl phosphate-alpha-L-Ara4N to lipid A. The modified arabinose is attached to lipid A and is required for resistance to polymyxin and cationic antimicrobial peptides.</text>
</comment>
<comment type="catalytic activity">
    <reaction evidence="1">
        <text>4-amino-4-deoxy-alpha-L-arabinopyranosyl di-trans,octa-cis-undecaprenyl phosphate + lipid IVA = lipid IIA + di-trans,octa-cis-undecaprenyl phosphate.</text>
        <dbReference type="EC" id="2.4.2.43"/>
    </reaction>
</comment>
<comment type="pathway">
    <text evidence="1">Lipopolysaccharide metabolism; 4-amino-4-deoxy-beta-L-arabinose-lipid A biosynthesis.</text>
</comment>
<comment type="subcellular location">
    <subcellularLocation>
        <location evidence="1">Cell inner membrane</location>
        <topology evidence="1">Multi-pass membrane protein</topology>
    </subcellularLocation>
</comment>
<comment type="similarity">
    <text evidence="1">Belongs to the glycosyltransferase 83 family.</text>
</comment>
<proteinExistence type="inferred from homology"/>
<dbReference type="EC" id="2.4.2.43" evidence="1"/>
<dbReference type="EMBL" id="BA000021">
    <property type="protein sequence ID" value="BAC24308.1"/>
    <property type="molecule type" value="Genomic_DNA"/>
</dbReference>
<dbReference type="SMR" id="Q8D339"/>
<dbReference type="STRING" id="36870.gene:10368650"/>
<dbReference type="CAZy" id="GT83">
    <property type="family name" value="Glycosyltransferase Family 83"/>
</dbReference>
<dbReference type="KEGG" id="wbr:b2257"/>
<dbReference type="eggNOG" id="COG1807">
    <property type="taxonomic scope" value="Bacteria"/>
</dbReference>
<dbReference type="HOGENOM" id="CLU_019200_2_1_6"/>
<dbReference type="OrthoDB" id="9775035at2"/>
<dbReference type="UniPathway" id="UPA00037"/>
<dbReference type="Proteomes" id="UP000000562">
    <property type="component" value="Chromosome"/>
</dbReference>
<dbReference type="GO" id="GO:0005886">
    <property type="term" value="C:plasma membrane"/>
    <property type="evidence" value="ECO:0007669"/>
    <property type="project" value="UniProtKB-SubCell"/>
</dbReference>
<dbReference type="GO" id="GO:0103015">
    <property type="term" value="F:4-amino-4-deoxy-L-arabinose transferase activity"/>
    <property type="evidence" value="ECO:0007669"/>
    <property type="project" value="UniProtKB-EC"/>
</dbReference>
<dbReference type="GO" id="GO:0000030">
    <property type="term" value="F:mannosyltransferase activity"/>
    <property type="evidence" value="ECO:0007669"/>
    <property type="project" value="InterPro"/>
</dbReference>
<dbReference type="GO" id="GO:0009245">
    <property type="term" value="P:lipid A biosynthetic process"/>
    <property type="evidence" value="ECO:0007669"/>
    <property type="project" value="UniProtKB-UniRule"/>
</dbReference>
<dbReference type="GO" id="GO:0009103">
    <property type="term" value="P:lipopolysaccharide biosynthetic process"/>
    <property type="evidence" value="ECO:0007669"/>
    <property type="project" value="UniProtKB-KW"/>
</dbReference>
<dbReference type="GO" id="GO:0006493">
    <property type="term" value="P:protein O-linked glycosylation"/>
    <property type="evidence" value="ECO:0007669"/>
    <property type="project" value="InterPro"/>
</dbReference>
<dbReference type="GO" id="GO:0010041">
    <property type="term" value="P:response to iron(III) ion"/>
    <property type="evidence" value="ECO:0007669"/>
    <property type="project" value="TreeGrafter"/>
</dbReference>
<dbReference type="HAMAP" id="MF_01165">
    <property type="entry name" value="ArnT_transfer"/>
    <property type="match status" value="1"/>
</dbReference>
<dbReference type="InterPro" id="IPR022839">
    <property type="entry name" value="ArnT_tfrase"/>
</dbReference>
<dbReference type="InterPro" id="IPR003342">
    <property type="entry name" value="Glyco_trans_39/83"/>
</dbReference>
<dbReference type="InterPro" id="IPR050297">
    <property type="entry name" value="LipidA_mod_glycosyltrf_83"/>
</dbReference>
<dbReference type="NCBIfam" id="NF009784">
    <property type="entry name" value="PRK13279.1"/>
    <property type="match status" value="1"/>
</dbReference>
<dbReference type="PANTHER" id="PTHR33908">
    <property type="entry name" value="MANNOSYLTRANSFERASE YKCB-RELATED"/>
    <property type="match status" value="1"/>
</dbReference>
<dbReference type="PANTHER" id="PTHR33908:SF3">
    <property type="entry name" value="UNDECAPRENYL PHOSPHATE-ALPHA-4-AMINO-4-DEOXY-L-ARABINOSE ARABINOSYL TRANSFERASE"/>
    <property type="match status" value="1"/>
</dbReference>
<dbReference type="Pfam" id="PF02366">
    <property type="entry name" value="PMT"/>
    <property type="match status" value="1"/>
</dbReference>
<name>ARNT_WIGBR</name>
<feature type="chain" id="PRO_0000121514" description="Undecaprenyl phosphate-alpha-4-amino-4-deoxy-L-arabinose arabinosyl transferase">
    <location>
        <begin position="1"/>
        <end position="562"/>
    </location>
</feature>
<feature type="transmembrane region" description="Helical" evidence="1">
    <location>
        <begin position="14"/>
        <end position="34"/>
    </location>
</feature>
<feature type="transmembrane region" description="Helical" evidence="1">
    <location>
        <begin position="91"/>
        <end position="111"/>
    </location>
</feature>
<feature type="transmembrane region" description="Helical" evidence="1">
    <location>
        <begin position="120"/>
        <end position="140"/>
    </location>
</feature>
<feature type="transmembrane region" description="Helical" evidence="1">
    <location>
        <begin position="142"/>
        <end position="162"/>
    </location>
</feature>
<feature type="transmembrane region" description="Helical" evidence="1">
    <location>
        <begin position="186"/>
        <end position="206"/>
    </location>
</feature>
<feature type="transmembrane region" description="Helical" evidence="1">
    <location>
        <begin position="215"/>
        <end position="235"/>
    </location>
</feature>
<feature type="transmembrane region" description="Helical" evidence="1">
    <location>
        <begin position="267"/>
        <end position="287"/>
    </location>
</feature>
<feature type="transmembrane region" description="Helical" evidence="1">
    <location>
        <begin position="302"/>
        <end position="322"/>
    </location>
</feature>
<feature type="transmembrane region" description="Helical" evidence="1">
    <location>
        <begin position="324"/>
        <end position="344"/>
    </location>
</feature>
<feature type="transmembrane region" description="Helical" evidence="1">
    <location>
        <begin position="354"/>
        <end position="374"/>
    </location>
</feature>
<feature type="transmembrane region" description="Helical" evidence="1">
    <location>
        <begin position="395"/>
        <end position="415"/>
    </location>
</feature>
<feature type="transmembrane region" description="Helical" evidence="1">
    <location>
        <begin position="425"/>
        <end position="445"/>
    </location>
</feature>
<keyword id="KW-0997">Cell inner membrane</keyword>
<keyword id="KW-1003">Cell membrane</keyword>
<keyword id="KW-0328">Glycosyltransferase</keyword>
<keyword id="KW-0441">Lipid A biosynthesis</keyword>
<keyword id="KW-0444">Lipid biosynthesis</keyword>
<keyword id="KW-0443">Lipid metabolism</keyword>
<keyword id="KW-0448">Lipopolysaccharide biosynthesis</keyword>
<keyword id="KW-0472">Membrane</keyword>
<keyword id="KW-1185">Reference proteome</keyword>
<keyword id="KW-0808">Transferase</keyword>
<keyword id="KW-0812">Transmembrane</keyword>
<keyword id="KW-1133">Transmembrane helix</keyword>